<keyword id="KW-0120">Carbon dioxide fixation</keyword>
<keyword id="KW-0456">Lyase</keyword>
<keyword id="KW-0460">Magnesium</keyword>
<sequence>MNEQYSALRSNVSMLGKVLGETIKDALGEHILDRVETIRKLSKSSRAGNDADRQELLTTLQNLSNDELLPVARAFSQFLNLANTAEQYHSISPKGEAASNPEVIARTLRKLKNQPDLSEATIKKAVESLSLELVLTAHPTEITRRTLIHKMVEVNTCLKQLDNKDLADYERNQLMRRLRQLIAQSWHTDEIRKQRPSPVDEAKWGFAVVENSLWQGVPNYLRELNEQLEENLGFKLPVDFVPVRFTSWMGGDRDGNPNVTADITRHVLLLSRWKATDLFLKDIQVLVSELSMVEATPELLALVGEEGAAEPYRYLMKNLRSRLMTTQAWLEARLKGQKLPKPEGLLTQNEELWEPLYACYQSLQACGMGIIANGDLLDTLRRVKCFGVPLVRIDIRQESTRHTEALGELTRYLGIGDYESWSEADKQAFLIRELNSKRPLLPRNWQPSAETREVLDTCQVIAEAPQGSIAAYVISMAKTPSDVLAVHLLLKEAGIGFAMPVAPLFETLDDLNNANDVMTQLLNIDWYRGLIQGKQMVMIGYSDSAKDAGVMAASWAQYQAQDALIKTCEKAGIELTLFHGRGGSIGRGGAPAHAALLSQPPGSLKGGLRVTEQGEMIRFKYGLPEITVSSLSLYTGAILEANLLPPPEPKESWRRIMDELSVISCDVYRGYVRENKDFVPYFRSATPEQELGKLPLGSRPAKRRPTGGVESLRAIPWIFAWTQNRLMLPAWLGAGTALQKVVEDGKQSELETMCRDWPFFSTRLGMLEMVFAKADLWLAEYYDQRLVAKELWPLGKELRNLLEEDIKVVLAIANDSHLMADLPWIAESIQLRNIYTDPLNVLQAELLHRSRLTEQNGKEPDPRVEQALMVTIAGVAAGMRNTG</sequence>
<comment type="function">
    <text evidence="1">Forms oxaloacetate, a four-carbon dicarboxylic acid source for the tricarboxylic acid cycle.</text>
</comment>
<comment type="catalytic activity">
    <reaction evidence="1">
        <text>oxaloacetate + phosphate = phosphoenolpyruvate + hydrogencarbonate</text>
        <dbReference type="Rhea" id="RHEA:28370"/>
        <dbReference type="ChEBI" id="CHEBI:16452"/>
        <dbReference type="ChEBI" id="CHEBI:17544"/>
        <dbReference type="ChEBI" id="CHEBI:43474"/>
        <dbReference type="ChEBI" id="CHEBI:58702"/>
        <dbReference type="EC" id="4.1.1.31"/>
    </reaction>
</comment>
<comment type="cofactor">
    <cofactor evidence="1">
        <name>Mg(2+)</name>
        <dbReference type="ChEBI" id="CHEBI:18420"/>
    </cofactor>
</comment>
<comment type="similarity">
    <text evidence="1">Belongs to the PEPCase type 1 family.</text>
</comment>
<accession>B7LUN9</accession>
<feature type="chain" id="PRO_1000129834" description="Phosphoenolpyruvate carboxylase">
    <location>
        <begin position="1"/>
        <end position="883"/>
    </location>
</feature>
<feature type="active site" evidence="1">
    <location>
        <position position="138"/>
    </location>
</feature>
<feature type="active site" evidence="1">
    <location>
        <position position="546"/>
    </location>
</feature>
<reference key="1">
    <citation type="journal article" date="2009" name="PLoS Genet.">
        <title>Organised genome dynamics in the Escherichia coli species results in highly diverse adaptive paths.</title>
        <authorList>
            <person name="Touchon M."/>
            <person name="Hoede C."/>
            <person name="Tenaillon O."/>
            <person name="Barbe V."/>
            <person name="Baeriswyl S."/>
            <person name="Bidet P."/>
            <person name="Bingen E."/>
            <person name="Bonacorsi S."/>
            <person name="Bouchier C."/>
            <person name="Bouvet O."/>
            <person name="Calteau A."/>
            <person name="Chiapello H."/>
            <person name="Clermont O."/>
            <person name="Cruveiller S."/>
            <person name="Danchin A."/>
            <person name="Diard M."/>
            <person name="Dossat C."/>
            <person name="Karoui M.E."/>
            <person name="Frapy E."/>
            <person name="Garry L."/>
            <person name="Ghigo J.M."/>
            <person name="Gilles A.M."/>
            <person name="Johnson J."/>
            <person name="Le Bouguenec C."/>
            <person name="Lescat M."/>
            <person name="Mangenot S."/>
            <person name="Martinez-Jehanne V."/>
            <person name="Matic I."/>
            <person name="Nassif X."/>
            <person name="Oztas S."/>
            <person name="Petit M.A."/>
            <person name="Pichon C."/>
            <person name="Rouy Z."/>
            <person name="Ruf C.S."/>
            <person name="Schneider D."/>
            <person name="Tourret J."/>
            <person name="Vacherie B."/>
            <person name="Vallenet D."/>
            <person name="Medigue C."/>
            <person name="Rocha E.P.C."/>
            <person name="Denamur E."/>
        </authorList>
    </citation>
    <scope>NUCLEOTIDE SEQUENCE [LARGE SCALE GENOMIC DNA]</scope>
    <source>
        <strain>ATCC 35469 / DSM 13698 / BCRC 15582 / CCUG 18766 / IAM 14443 / JCM 21226 / LMG 7866 / NBRC 102419 / NCTC 12128 / CDC 0568-73</strain>
    </source>
</reference>
<name>CAPP_ESCF3</name>
<protein>
    <recommendedName>
        <fullName evidence="1">Phosphoenolpyruvate carboxylase</fullName>
        <shortName evidence="1">PEPC</shortName>
        <shortName evidence="1">PEPCase</shortName>
        <ecNumber evidence="1">4.1.1.31</ecNumber>
    </recommendedName>
</protein>
<dbReference type="EC" id="4.1.1.31" evidence="1"/>
<dbReference type="EMBL" id="CU928158">
    <property type="protein sequence ID" value="CAQ91242.1"/>
    <property type="molecule type" value="Genomic_DNA"/>
</dbReference>
<dbReference type="RefSeq" id="WP_001005537.1">
    <property type="nucleotide sequence ID" value="NC_011740.1"/>
</dbReference>
<dbReference type="SMR" id="B7LUN9"/>
<dbReference type="GeneID" id="75059403"/>
<dbReference type="KEGG" id="efe:EFER_3807"/>
<dbReference type="HOGENOM" id="CLU_006557_2_0_6"/>
<dbReference type="OrthoDB" id="9768133at2"/>
<dbReference type="Proteomes" id="UP000000745">
    <property type="component" value="Chromosome"/>
</dbReference>
<dbReference type="GO" id="GO:0005829">
    <property type="term" value="C:cytosol"/>
    <property type="evidence" value="ECO:0007669"/>
    <property type="project" value="TreeGrafter"/>
</dbReference>
<dbReference type="GO" id="GO:0000287">
    <property type="term" value="F:magnesium ion binding"/>
    <property type="evidence" value="ECO:0007669"/>
    <property type="project" value="UniProtKB-UniRule"/>
</dbReference>
<dbReference type="GO" id="GO:0008964">
    <property type="term" value="F:phosphoenolpyruvate carboxylase activity"/>
    <property type="evidence" value="ECO:0007669"/>
    <property type="project" value="UniProtKB-UniRule"/>
</dbReference>
<dbReference type="GO" id="GO:0015977">
    <property type="term" value="P:carbon fixation"/>
    <property type="evidence" value="ECO:0007669"/>
    <property type="project" value="UniProtKB-UniRule"/>
</dbReference>
<dbReference type="GO" id="GO:0006107">
    <property type="term" value="P:oxaloacetate metabolic process"/>
    <property type="evidence" value="ECO:0007669"/>
    <property type="project" value="UniProtKB-UniRule"/>
</dbReference>
<dbReference type="GO" id="GO:0006099">
    <property type="term" value="P:tricarboxylic acid cycle"/>
    <property type="evidence" value="ECO:0007669"/>
    <property type="project" value="InterPro"/>
</dbReference>
<dbReference type="FunFam" id="1.20.1440.90:FF:000002">
    <property type="entry name" value="Phosphoenolpyruvate carboxylase"/>
    <property type="match status" value="1"/>
</dbReference>
<dbReference type="Gene3D" id="1.20.1440.90">
    <property type="entry name" value="Phosphoenolpyruvate/pyruvate domain"/>
    <property type="match status" value="1"/>
</dbReference>
<dbReference type="HAMAP" id="MF_00595">
    <property type="entry name" value="PEPcase_type1"/>
    <property type="match status" value="1"/>
</dbReference>
<dbReference type="InterPro" id="IPR021135">
    <property type="entry name" value="PEP_COase"/>
</dbReference>
<dbReference type="InterPro" id="IPR022805">
    <property type="entry name" value="PEP_COase_bac/pln-type"/>
</dbReference>
<dbReference type="InterPro" id="IPR018129">
    <property type="entry name" value="PEP_COase_Lys_AS"/>
</dbReference>
<dbReference type="InterPro" id="IPR033129">
    <property type="entry name" value="PEPCASE_His_AS"/>
</dbReference>
<dbReference type="InterPro" id="IPR015813">
    <property type="entry name" value="Pyrv/PenolPyrv_kinase-like_dom"/>
</dbReference>
<dbReference type="NCBIfam" id="NF000584">
    <property type="entry name" value="PRK00009.1"/>
    <property type="match status" value="1"/>
</dbReference>
<dbReference type="PANTHER" id="PTHR30523">
    <property type="entry name" value="PHOSPHOENOLPYRUVATE CARBOXYLASE"/>
    <property type="match status" value="1"/>
</dbReference>
<dbReference type="PANTHER" id="PTHR30523:SF6">
    <property type="entry name" value="PHOSPHOENOLPYRUVATE CARBOXYLASE"/>
    <property type="match status" value="1"/>
</dbReference>
<dbReference type="Pfam" id="PF00311">
    <property type="entry name" value="PEPcase"/>
    <property type="match status" value="1"/>
</dbReference>
<dbReference type="PRINTS" id="PR00150">
    <property type="entry name" value="PEPCARBXLASE"/>
</dbReference>
<dbReference type="SUPFAM" id="SSF51621">
    <property type="entry name" value="Phosphoenolpyruvate/pyruvate domain"/>
    <property type="match status" value="1"/>
</dbReference>
<dbReference type="PROSITE" id="PS00781">
    <property type="entry name" value="PEPCASE_1"/>
    <property type="match status" value="1"/>
</dbReference>
<dbReference type="PROSITE" id="PS00393">
    <property type="entry name" value="PEPCASE_2"/>
    <property type="match status" value="1"/>
</dbReference>
<proteinExistence type="inferred from homology"/>
<organism>
    <name type="scientific">Escherichia fergusonii (strain ATCC 35469 / DSM 13698 / CCUG 18766 / IAM 14443 / JCM 21226 / LMG 7866 / NBRC 102419 / NCTC 12128 / CDC 0568-73)</name>
    <dbReference type="NCBI Taxonomy" id="585054"/>
    <lineage>
        <taxon>Bacteria</taxon>
        <taxon>Pseudomonadati</taxon>
        <taxon>Pseudomonadota</taxon>
        <taxon>Gammaproteobacteria</taxon>
        <taxon>Enterobacterales</taxon>
        <taxon>Enterobacteriaceae</taxon>
        <taxon>Escherichia</taxon>
    </lineage>
</organism>
<evidence type="ECO:0000255" key="1">
    <source>
        <dbReference type="HAMAP-Rule" id="MF_00595"/>
    </source>
</evidence>
<gene>
    <name evidence="1" type="primary">ppc</name>
    <name type="ordered locus">EFER_3807</name>
</gene>